<accession>P0DQZ8</accession>
<keyword id="KW-0027">Amidation</keyword>
<keyword id="KW-0044">Antibiotic</keyword>
<keyword id="KW-0929">Antimicrobial</keyword>
<keyword id="KW-0295">Fungicide</keyword>
<keyword id="KW-0391">Immunity</keyword>
<keyword id="KW-0399">Innate immunity</keyword>
<keyword id="KW-0677">Repeat</keyword>
<keyword id="KW-0964">Secreted</keyword>
<keyword id="KW-0732">Signal</keyword>
<comment type="function">
    <text evidence="2">The synthetic peptide shows antimicrobial activities against Gram-negative bacteria (but not against all strains tested), Gram-positive bacteria (all strains tested) and the fungi C.albicans and C.parapsilosis. Exhibits little hemolytic activity against washed human erythrocytes.</text>
</comment>
<comment type="subcellular location">
    <subcellularLocation>
        <location evidence="5">Secreted</location>
    </subcellularLocation>
</comment>
<comment type="tissue specificity">
    <text evidence="5">Expressed by the venom gland.</text>
</comment>
<comment type="similarity">
    <text evidence="4">Belongs to the MCD family. Mastoparan subfamily.</text>
</comment>
<organism>
    <name type="scientific">Vespa tropica</name>
    <name type="common">Greater banded hornet</name>
    <name type="synonym">Sphex tropica</name>
    <dbReference type="NCBI Taxonomy" id="7450"/>
    <lineage>
        <taxon>Eukaryota</taxon>
        <taxon>Metazoa</taxon>
        <taxon>Ecdysozoa</taxon>
        <taxon>Arthropoda</taxon>
        <taxon>Hexapoda</taxon>
        <taxon>Insecta</taxon>
        <taxon>Pterygota</taxon>
        <taxon>Neoptera</taxon>
        <taxon>Endopterygota</taxon>
        <taxon>Hymenoptera</taxon>
        <taxon>Apocrita</taxon>
        <taxon>Aculeata</taxon>
        <taxon>Vespoidea</taxon>
        <taxon>Vespidae</taxon>
        <taxon>Vespinae</taxon>
        <taxon>Vespa</taxon>
    </lineage>
</organism>
<dbReference type="GO" id="GO:0005576">
    <property type="term" value="C:extracellular region"/>
    <property type="evidence" value="ECO:0007669"/>
    <property type="project" value="UniProtKB-SubCell"/>
</dbReference>
<dbReference type="GO" id="GO:0042742">
    <property type="term" value="P:defense response to bacterium"/>
    <property type="evidence" value="ECO:0007669"/>
    <property type="project" value="UniProtKB-KW"/>
</dbReference>
<dbReference type="GO" id="GO:0050832">
    <property type="term" value="P:defense response to fungus"/>
    <property type="evidence" value="ECO:0007669"/>
    <property type="project" value="UniProtKB-KW"/>
</dbReference>
<dbReference type="GO" id="GO:0045087">
    <property type="term" value="P:innate immune response"/>
    <property type="evidence" value="ECO:0007669"/>
    <property type="project" value="UniProtKB-KW"/>
</dbReference>
<dbReference type="GO" id="GO:0031640">
    <property type="term" value="P:killing of cells of another organism"/>
    <property type="evidence" value="ECO:0007669"/>
    <property type="project" value="UniProtKB-KW"/>
</dbReference>
<reference key="1">
    <citation type="journal article" date="2013" name="Toxicon">
        <title>Antimicrobial peptides from the venom gland of the social wasp Vespa tropica.</title>
        <authorList>
            <person name="Yang X."/>
            <person name="Wang Y."/>
            <person name="Lee W.H."/>
            <person name="Zhang Y."/>
        </authorList>
    </citation>
    <scope>NUCLEOTIDE SEQUENCE [MRNA]</scope>
    <scope>FUNCTION</scope>
    <scope>PROBABLE AMIDATION AT LEU-59</scope>
    <scope>SYNTHESIS OF 46-59</scope>
    <source>
        <tissue>Venom gland</tissue>
    </source>
</reference>
<proteinExistence type="evidence at protein level"/>
<protein>
    <recommendedName>
        <fullName evidence="3">Mastoparan-VT6</fullName>
    </recommendedName>
</protein>
<evidence type="ECO:0000255" key="1"/>
<evidence type="ECO:0000269" key="2">
    <source>
    </source>
</evidence>
<evidence type="ECO:0000303" key="3">
    <source>
    </source>
</evidence>
<evidence type="ECO:0000305" key="4"/>
<evidence type="ECO:0000305" key="5">
    <source>
    </source>
</evidence>
<sequence>MKNTILILFTAFIALLGFFGMSAEALADPKADPLAGPNPDADPEAINLKAIAALVKKLLG</sequence>
<feature type="signal peptide" evidence="1">
    <location>
        <begin position="1"/>
        <end position="27"/>
    </location>
</feature>
<feature type="propeptide" id="PRO_0000458793" evidence="5">
    <location>
        <begin position="28"/>
        <end position="45"/>
    </location>
</feature>
<feature type="peptide" id="PRO_0000458794" description="Mastoparan-VT6" evidence="2">
    <location>
        <begin position="46"/>
        <end position="59"/>
    </location>
</feature>
<feature type="repeat" description="AXPX 1" evidence="4">
    <location>
        <begin position="27"/>
        <end position="30"/>
    </location>
</feature>
<feature type="repeat" description="AXPX 2" evidence="4">
    <location>
        <begin position="31"/>
        <end position="34"/>
    </location>
</feature>
<feature type="repeat" description="AXPX 3" evidence="4">
    <location>
        <begin position="35"/>
        <end position="38"/>
    </location>
</feature>
<feature type="repeat" description="AXPX 4" evidence="4">
    <location>
        <begin position="41"/>
        <end position="44"/>
    </location>
</feature>
<feature type="modified residue" description="Leucine amide" evidence="2">
    <location>
        <position position="59"/>
    </location>
</feature>
<name>MAST6_VESTR</name>